<protein>
    <recommendedName>
        <fullName>3-oxo-5-alpha-steroid 4-dehydrogenase</fullName>
        <ecNumber>1.3.99.5</ecNumber>
    </recommendedName>
    <alternativeName>
        <fullName>Delta 4, 5-alpha steroid dehydrogenase</fullName>
    </alternativeName>
</protein>
<accession>Q59327</accession>
<organism>
    <name type="scientific">Comamonas testosteroni</name>
    <name type="common">Pseudomonas testosteroni</name>
    <dbReference type="NCBI Taxonomy" id="285"/>
    <lineage>
        <taxon>Bacteria</taxon>
        <taxon>Pseudomonadati</taxon>
        <taxon>Pseudomonadota</taxon>
        <taxon>Betaproteobacteria</taxon>
        <taxon>Burkholderiales</taxon>
        <taxon>Comamonadaceae</taxon>
        <taxon>Comamonas</taxon>
    </lineage>
</organism>
<evidence type="ECO:0000250" key="1"/>
<evidence type="ECO:0000255" key="2"/>
<evidence type="ECO:0000269" key="3">
    <source>
    </source>
</evidence>
<evidence type="ECO:0000305" key="4"/>
<evidence type="ECO:0000305" key="5">
    <source>
    </source>
</evidence>
<proteinExistence type="evidence at protein level"/>
<name>OASD_COMTE</name>
<comment type="function">
    <text evidence="3">Involved in the degradation of steroids having an A:B ring fusion in a trans configuration. Catalyzes the elimination of hydrogens located at positions 4 and 5 and the introduction of double bonds into ring A.</text>
</comment>
<comment type="catalytic activity">
    <reaction evidence="3">
        <text>a 3-oxo-5alpha-steroid + A = a 3-oxo-Delta(4)-steroid + AH2</text>
        <dbReference type="Rhea" id="RHEA:13805"/>
        <dbReference type="ChEBI" id="CHEBI:13193"/>
        <dbReference type="ChEBI" id="CHEBI:13601"/>
        <dbReference type="ChEBI" id="CHEBI:17499"/>
        <dbReference type="ChEBI" id="CHEBI:47909"/>
        <dbReference type="EC" id="1.3.99.5"/>
    </reaction>
</comment>
<comment type="catalytic activity">
    <reaction evidence="3">
        <text>5alpha-androstan-3,17-dione + A = androst-4-ene-3,17-dione + AH2</text>
        <dbReference type="Rhea" id="RHEA:51048"/>
        <dbReference type="ChEBI" id="CHEBI:13193"/>
        <dbReference type="ChEBI" id="CHEBI:15994"/>
        <dbReference type="ChEBI" id="CHEBI:16422"/>
        <dbReference type="ChEBI" id="CHEBI:17499"/>
        <dbReference type="EC" id="1.3.99.5"/>
    </reaction>
</comment>
<comment type="catalytic activity">
    <reaction evidence="3">
        <text>5alpha-androst-1-ene-3,17-dione + A = androsta-1,4-diene-3,17-dione + AH2</text>
        <dbReference type="Rhea" id="RHEA:51060"/>
        <dbReference type="ChEBI" id="CHEBI:13193"/>
        <dbReference type="ChEBI" id="CHEBI:17499"/>
        <dbReference type="ChEBI" id="CHEBI:40799"/>
        <dbReference type="ChEBI" id="CHEBI:133930"/>
        <dbReference type="EC" id="1.3.99.5"/>
    </reaction>
</comment>
<comment type="cofactor">
    <cofactor evidence="5">
        <name>FAD</name>
        <dbReference type="ChEBI" id="CHEBI:57692"/>
    </cofactor>
</comment>
<comment type="activity regulation">
    <text evidence="3">Inhibition occurs with substrate concentrations above 25 uM.</text>
</comment>
<comment type="biophysicochemical properties">
    <kinetics>
        <KM evidence="3">6.6 uM for 5-alpha-1-androstene-3,17-dione (at 30 degrees Celsius and at pH 8.2)</KM>
        <KM evidence="3">16.1 uM for 5-alpha-androstane-3,17-dione (at 30 degrees Celsius and at pH 8.2)</KM>
        <Vmax evidence="3">456.0 nmol/min/mg enzyme with 5-alpha-androstane-3,17-dione as substrate (at 30 degrees Celsius and at pH 8.2)</Vmax>
        <Vmax evidence="3">700.0 nmol/min/mg enzyme with 5-alpha-1-androstene-3,17-dione as substrate (at 30 degrees Celsius and at pH 8.2)</Vmax>
    </kinetics>
    <phDependence>
        <text evidence="3">Optimum pH is 8.</text>
    </phDependence>
    <temperatureDependence>
        <text evidence="3">Optimum temperature is 40 degrees Celsius.</text>
    </temperatureDependence>
</comment>
<comment type="subcellular location">
    <subcellularLocation>
        <location evidence="4">Membrane</location>
        <topology evidence="4">Single-pass membrane protein</topology>
    </subcellularLocation>
</comment>
<comment type="similarity">
    <text evidence="4">Belongs to the FAD-dependent oxidoreductase 2 family.</text>
</comment>
<sequence length="530" mass="57289">MSNVKKHVSTINPVGEVLDVGSADEVQWSDASDVVVVGWGGAGASAAIEAREQGAEVLVIERFSGGGASVLSGGVVYAGAVPATRRKPASRFTEAMTAYLKHEVNGVVSDETLARFSRDSVTNLNWLEKQGATFASTMPGYKTSYPADGMYLYYSGNEVVPAYGNPQLLKKPPPRGHRVVAKGQSGAMFFAALQKSTLAHGARTLTQARVQRLVREKDSGRVLGVEVMVLPEGDPRTERHKKLDELVAKSACIRRRVPRRVAVNVRRSRARSARSATSVPAKVWCCPLAAISSIRNCWSMRRYKPGWLTGAAGCDGSGLRLGQSVGGIAQDLNNISAWRFITPPSVWPKGLVVNIQGERFCNEQVYGAKLGYEMMEKQGGQAWLIIDSNVRRQAAWQCLFGGLWAFQSMPALALMYKVAIKGKSVDDLAKKLRMDAAVLQLQFDRANAPARGEIEDPLGKSQDMRHEFKGGSLFAIDISISQKMFPLAVLSLGGLKVNEDNGAVIDGAGYDIPGLYAAGVPPLVWLPRVT</sequence>
<keyword id="KW-0274">FAD</keyword>
<keyword id="KW-0285">Flavoprotein</keyword>
<keyword id="KW-0443">Lipid metabolism</keyword>
<keyword id="KW-0472">Membrane</keyword>
<keyword id="KW-0560">Oxidoreductase</keyword>
<keyword id="KW-0753">Steroid metabolism</keyword>
<keyword id="KW-0812">Transmembrane</keyword>
<keyword id="KW-1133">Transmembrane helix</keyword>
<dbReference type="EC" id="1.3.99.5"/>
<dbReference type="EMBL" id="L23428">
    <property type="protein sequence ID" value="AAB08517.1"/>
    <property type="molecule type" value="Genomic_DNA"/>
</dbReference>
<dbReference type="PIR" id="JC6030">
    <property type="entry name" value="JC6030"/>
</dbReference>
<dbReference type="SMR" id="Q59327"/>
<dbReference type="KEGG" id="ag:AAB08517"/>
<dbReference type="BioCyc" id="MetaCyc:MONOMER-16925"/>
<dbReference type="GO" id="GO:0016020">
    <property type="term" value="C:membrane"/>
    <property type="evidence" value="ECO:0007669"/>
    <property type="project" value="UniProtKB-SubCell"/>
</dbReference>
<dbReference type="GO" id="GO:0003865">
    <property type="term" value="F:3-oxo-5-alpha-steroid 4-dehydrogenase activity"/>
    <property type="evidence" value="ECO:0007669"/>
    <property type="project" value="UniProtKB-EC"/>
</dbReference>
<dbReference type="GO" id="GO:0047571">
    <property type="term" value="F:3-oxosteroid 1-dehydrogenase activity"/>
    <property type="evidence" value="ECO:0000314"/>
    <property type="project" value="UniProtKB"/>
</dbReference>
<dbReference type="GO" id="GO:0006706">
    <property type="term" value="P:steroid catabolic process"/>
    <property type="evidence" value="ECO:0000314"/>
    <property type="project" value="UniProtKB"/>
</dbReference>
<dbReference type="FunFam" id="3.90.700.10:FF:000007">
    <property type="entry name" value="NADH-dependent fumarate reductase"/>
    <property type="match status" value="1"/>
</dbReference>
<dbReference type="Gene3D" id="3.50.50.60">
    <property type="entry name" value="FAD/NAD(P)-binding domain"/>
    <property type="match status" value="1"/>
</dbReference>
<dbReference type="Gene3D" id="3.90.700.10">
    <property type="entry name" value="Succinate dehydrogenase/fumarate reductase flavoprotein, catalytic domain"/>
    <property type="match status" value="1"/>
</dbReference>
<dbReference type="InterPro" id="IPR003953">
    <property type="entry name" value="FAD-dep_OxRdtase_2_FAD-bd"/>
</dbReference>
<dbReference type="InterPro" id="IPR050315">
    <property type="entry name" value="FAD-oxidoreductase_2"/>
</dbReference>
<dbReference type="InterPro" id="IPR036188">
    <property type="entry name" value="FAD/NAD-bd_sf"/>
</dbReference>
<dbReference type="InterPro" id="IPR027477">
    <property type="entry name" value="Succ_DH/fumarate_Rdtase_cat_sf"/>
</dbReference>
<dbReference type="NCBIfam" id="NF005511">
    <property type="entry name" value="PRK07121.1-4"/>
    <property type="match status" value="1"/>
</dbReference>
<dbReference type="PANTHER" id="PTHR43400:SF10">
    <property type="entry name" value="3-OXOSTEROID 1-DEHYDROGENASE"/>
    <property type="match status" value="1"/>
</dbReference>
<dbReference type="PANTHER" id="PTHR43400">
    <property type="entry name" value="FUMARATE REDUCTASE"/>
    <property type="match status" value="1"/>
</dbReference>
<dbReference type="Pfam" id="PF00890">
    <property type="entry name" value="FAD_binding_2"/>
    <property type="match status" value="1"/>
</dbReference>
<dbReference type="PRINTS" id="PR00411">
    <property type="entry name" value="PNDRDTASEI"/>
</dbReference>
<dbReference type="SUPFAM" id="SSF51905">
    <property type="entry name" value="FAD/NAD(P)-binding domain"/>
    <property type="match status" value="1"/>
</dbReference>
<dbReference type="SUPFAM" id="SSF56425">
    <property type="entry name" value="Succinate dehydrogenase/fumarate reductase flavoprotein, catalytic domain"/>
    <property type="match status" value="1"/>
</dbReference>
<feature type="chain" id="PRO_0000418533" description="3-oxo-5-alpha-steroid 4-dehydrogenase">
    <location>
        <begin position="1"/>
        <end position="530"/>
    </location>
</feature>
<feature type="transmembrane region" description="Helical" evidence="2">
    <location>
        <begin position="395"/>
        <end position="415"/>
    </location>
</feature>
<feature type="binding site" evidence="1">
    <location>
        <begin position="33"/>
        <end position="62"/>
    </location>
    <ligand>
        <name>FAD</name>
        <dbReference type="ChEBI" id="CHEBI:57692"/>
    </ligand>
</feature>
<reference key="1">
    <citation type="journal article" date="1996" name="J. Bacteriol.">
        <title>Comamonas testosteroni 3-ketosteroid-delta 4(5 alpha)-dehydrogenase: gene and protein characterization.</title>
        <authorList>
            <person name="Florin C."/>
            <person name="Kohler T."/>
            <person name="Grandguillot M."/>
            <person name="Plesiat P."/>
        </authorList>
    </citation>
    <scope>NUCLEOTIDE SEQUENCE [GENOMIC DNA]</scope>
    <scope>FUNCTION AS A DEHYDROGENASE</scope>
    <scope>CATALYTIC ACTIVITY</scope>
    <scope>BIOPHYSICOCHEMICAL PROPERTIES</scope>
    <scope>ACTIVITY REGULATION</scope>
    <scope>SUBCELLULAR LOCATION</scope>
    <scope>COFACTOR</scope>
    <scope>SUBSTRATE SPECIFICITY</scope>
</reference>
<reference key="2">
    <citation type="journal article" date="1959" name="J. Biol. Chem.">
        <title>Bacterial oxidation of steroids. II. Studies on the enzymatic mechanism of ring A dehydrogenation.</title>
        <authorList>
            <person name="Levy H.R."/>
            <person name="Talalay P."/>
        </authorList>
    </citation>
    <scope>SUBCELLULAR LOCATION</scope>
</reference>